<name>TRP5_ARATH</name>
<evidence type="ECO:0000255" key="1">
    <source>
        <dbReference type="PROSITE-ProRule" id="PRU00625"/>
    </source>
</evidence>
<evidence type="ECO:0000256" key="2">
    <source>
        <dbReference type="SAM" id="MobiDB-lite"/>
    </source>
</evidence>
<evidence type="ECO:0000269" key="3">
    <source>
    </source>
</evidence>
<evidence type="ECO:0000305" key="4"/>
<proteinExistence type="evidence at protein level"/>
<keyword id="KW-0238">DNA-binding</keyword>
<keyword id="KW-0539">Nucleus</keyword>
<keyword id="KW-1185">Reference proteome</keyword>
<keyword id="KW-0804">Transcription</keyword>
<keyword id="KW-0805">Transcription regulation</keyword>
<sequence>MVLQKRPDYGFNGYEVPHTPRAARSPRKSAFKKKSENHQISSFDLLAAVAGKLLLEGGNSSSSSNNTSGNNEDQCAVKKEPLNGGDIMVEEETTNSDHDNNNAERSFFVSEILQKSHEMQSFNRSPSPLKEFHFGSSSGITSDSSEKFETQELAYDESKINNGDCYRSESNDKKSMLGGLNFEAKLSRNVVGKDEKHIGSGFRKPIPQNPSTCSDDVDLHGKENDDGENFSACYRTKSFRSTLRIGDRRIRKVWASKYCKVPPKLKDTTVTNSDLDLKSDYYSKKHCLKSLRSERNYPIKKRRYFDGYTASQSEETNKNEGQSGSPRKASAFLSSIACQKQPAAFQSPRDSNNVKLGIKSFRVPELFIEIPETATVGSLKRTVLEAVTSILGGGLRIGVLVHGKKVRDDSKMLLQTGLSLDTLSDTLGFCLEPNPPQSTKPLSPEDSDFARPCNVPHTLTRCLPSPGKHAKPSNSVESDLDSKPSAPNRGKTIYSRALIPVSPLHAQALTVVPPRKTKRSEVAQRRIRRPFSVAEVEALVQAVERLGTGRWRDVKLRAFDNAKHRTYVDLKDKWKTLVHTARISPQQRRGEPVPQELLDRVLTAHAYWSQQQGKHQLLEGPQQLETSLGL</sequence>
<dbReference type="EMBL" id="AY519535">
    <property type="protein sequence ID" value="AAS10005.1"/>
    <property type="molecule type" value="mRNA"/>
</dbReference>
<dbReference type="EMBL" id="AC022464">
    <property type="protein sequence ID" value="AAF79547.1"/>
    <property type="status" value="ALT_SEQ"/>
    <property type="molecule type" value="Genomic_DNA"/>
</dbReference>
<dbReference type="EMBL" id="CP002684">
    <property type="protein sequence ID" value="AEE28140.1"/>
    <property type="molecule type" value="Genomic_DNA"/>
</dbReference>
<dbReference type="PIR" id="A86210">
    <property type="entry name" value="A86210"/>
</dbReference>
<dbReference type="RefSeq" id="NP_001318943.1">
    <property type="nucleotide sequence ID" value="NM_001331707.1"/>
</dbReference>
<dbReference type="SMR" id="Q6R0E3"/>
<dbReference type="BioGRID" id="22509">
    <property type="interactions" value="3"/>
</dbReference>
<dbReference type="STRING" id="3702.Q6R0E3"/>
<dbReference type="PaxDb" id="3702-AT1G07540.1"/>
<dbReference type="EnsemblPlants" id="AT1G07540.1">
    <property type="protein sequence ID" value="AT1G07540.1"/>
    <property type="gene ID" value="AT1G07540"/>
</dbReference>
<dbReference type="GeneID" id="837268"/>
<dbReference type="Gramene" id="AT1G07540.1">
    <property type="protein sequence ID" value="AT1G07540.1"/>
    <property type="gene ID" value="AT1G07540"/>
</dbReference>
<dbReference type="KEGG" id="ath:AT1G07540"/>
<dbReference type="Araport" id="AT1G07540"/>
<dbReference type="TAIR" id="AT1G07540">
    <property type="gene designation" value="TRFL2"/>
</dbReference>
<dbReference type="eggNOG" id="ENOG502QPSZ">
    <property type="taxonomic scope" value="Eukaryota"/>
</dbReference>
<dbReference type="HOGENOM" id="CLU_020710_2_0_1"/>
<dbReference type="InParanoid" id="Q6R0E3"/>
<dbReference type="OMA" id="ETQELAY"/>
<dbReference type="PhylomeDB" id="Q6R0E3"/>
<dbReference type="PRO" id="PR:Q6R0E3"/>
<dbReference type="Proteomes" id="UP000006548">
    <property type="component" value="Chromosome 1"/>
</dbReference>
<dbReference type="ExpressionAtlas" id="Q6R0E3">
    <property type="expression patterns" value="baseline and differential"/>
</dbReference>
<dbReference type="GO" id="GO:0005634">
    <property type="term" value="C:nucleus"/>
    <property type="evidence" value="ECO:0007669"/>
    <property type="project" value="UniProtKB-SubCell"/>
</dbReference>
<dbReference type="GO" id="GO:0042162">
    <property type="term" value="F:telomeric DNA binding"/>
    <property type="evidence" value="ECO:0007669"/>
    <property type="project" value="UniProtKB-ARBA"/>
</dbReference>
<dbReference type="CDD" id="cd11660">
    <property type="entry name" value="SANT_TRF"/>
    <property type="match status" value="1"/>
</dbReference>
<dbReference type="Gene3D" id="1.10.246.220">
    <property type="match status" value="1"/>
</dbReference>
<dbReference type="InterPro" id="IPR009057">
    <property type="entry name" value="Homeodomain-like_sf"/>
</dbReference>
<dbReference type="InterPro" id="IPR017930">
    <property type="entry name" value="Myb_dom"/>
</dbReference>
<dbReference type="InterPro" id="IPR001005">
    <property type="entry name" value="SANT/Myb"/>
</dbReference>
<dbReference type="InterPro" id="IPR031105">
    <property type="entry name" value="TRP_plant"/>
</dbReference>
<dbReference type="PANTHER" id="PTHR21717:SF70">
    <property type="entry name" value="TELOMERE REPEAT-BINDING PROTEIN 2-RELATED"/>
    <property type="match status" value="1"/>
</dbReference>
<dbReference type="PANTHER" id="PTHR21717">
    <property type="entry name" value="TELOMERIC REPEAT BINDING PROTEIN"/>
    <property type="match status" value="1"/>
</dbReference>
<dbReference type="Pfam" id="PF23603">
    <property type="entry name" value="Ubiquitin_TPR1"/>
    <property type="match status" value="1"/>
</dbReference>
<dbReference type="SMART" id="SM00717">
    <property type="entry name" value="SANT"/>
    <property type="match status" value="1"/>
</dbReference>
<dbReference type="SUPFAM" id="SSF46689">
    <property type="entry name" value="Homeodomain-like"/>
    <property type="match status" value="1"/>
</dbReference>
<dbReference type="PROSITE" id="PS51294">
    <property type="entry name" value="HTH_MYB"/>
    <property type="match status" value="1"/>
</dbReference>
<organism>
    <name type="scientific">Arabidopsis thaliana</name>
    <name type="common">Mouse-ear cress</name>
    <dbReference type="NCBI Taxonomy" id="3702"/>
    <lineage>
        <taxon>Eukaryota</taxon>
        <taxon>Viridiplantae</taxon>
        <taxon>Streptophyta</taxon>
        <taxon>Embryophyta</taxon>
        <taxon>Tracheophyta</taxon>
        <taxon>Spermatophyta</taxon>
        <taxon>Magnoliopsida</taxon>
        <taxon>eudicotyledons</taxon>
        <taxon>Gunneridae</taxon>
        <taxon>Pentapetalae</taxon>
        <taxon>rosids</taxon>
        <taxon>malvids</taxon>
        <taxon>Brassicales</taxon>
        <taxon>Brassicaceae</taxon>
        <taxon>Camelineae</taxon>
        <taxon>Arabidopsis</taxon>
    </lineage>
</organism>
<comment type="function">
    <text>Binds specifically to the plant telomeric double-stranded DNA sequences. At least 6 repeats of telomeric sequences are required for binding.</text>
</comment>
<comment type="subunit">
    <text evidence="3">Homodimer.</text>
</comment>
<comment type="subcellular location">
    <subcellularLocation>
        <location evidence="1">Nucleus</location>
    </subcellularLocation>
</comment>
<comment type="tissue specificity">
    <text evidence="3">Expressed ubiquitously.</text>
</comment>
<comment type="disruption phenotype">
    <text evidence="3">No visible phenotype, probably due to redundancy.</text>
</comment>
<comment type="sequence caution" evidence="4">
    <conflict type="erroneous gene model prediction">
        <sequence resource="EMBL-CDS" id="AAF79547"/>
    </conflict>
</comment>
<accession>Q6R0E3</accession>
<accession>Q9LNX7</accession>
<gene>
    <name type="primary">TRP5</name>
    <name type="synonym">TRFL2</name>
    <name type="ordered locus">At1g07540</name>
    <name type="ORF">F22G5.8</name>
</gene>
<reference key="1">
    <citation type="submission" date="2004-02" db="EMBL/GenBank/DDBJ databases">
        <title>The MYB transcription factor family in Arabidopsis: a genome-wide cloning and expression pattern analysis.</title>
        <authorList>
            <person name="Qu L."/>
            <person name="Gu H."/>
        </authorList>
    </citation>
    <scope>NUCLEOTIDE SEQUENCE [MRNA]</scope>
</reference>
<reference key="2">
    <citation type="journal article" date="2000" name="Nature">
        <title>Sequence and analysis of chromosome 1 of the plant Arabidopsis thaliana.</title>
        <authorList>
            <person name="Theologis A."/>
            <person name="Ecker J.R."/>
            <person name="Palm C.J."/>
            <person name="Federspiel N.A."/>
            <person name="Kaul S."/>
            <person name="White O."/>
            <person name="Alonso J."/>
            <person name="Altafi H."/>
            <person name="Araujo R."/>
            <person name="Bowman C.L."/>
            <person name="Brooks S.Y."/>
            <person name="Buehler E."/>
            <person name="Chan A."/>
            <person name="Chao Q."/>
            <person name="Chen H."/>
            <person name="Cheuk R.F."/>
            <person name="Chin C.W."/>
            <person name="Chung M.K."/>
            <person name="Conn L."/>
            <person name="Conway A.B."/>
            <person name="Conway A.R."/>
            <person name="Creasy T.H."/>
            <person name="Dewar K."/>
            <person name="Dunn P."/>
            <person name="Etgu P."/>
            <person name="Feldblyum T.V."/>
            <person name="Feng J.-D."/>
            <person name="Fong B."/>
            <person name="Fujii C.Y."/>
            <person name="Gill J.E."/>
            <person name="Goldsmith A.D."/>
            <person name="Haas B."/>
            <person name="Hansen N.F."/>
            <person name="Hughes B."/>
            <person name="Huizar L."/>
            <person name="Hunter J.L."/>
            <person name="Jenkins J."/>
            <person name="Johnson-Hopson C."/>
            <person name="Khan S."/>
            <person name="Khaykin E."/>
            <person name="Kim C.J."/>
            <person name="Koo H.L."/>
            <person name="Kremenetskaia I."/>
            <person name="Kurtz D.B."/>
            <person name="Kwan A."/>
            <person name="Lam B."/>
            <person name="Langin-Hooper S."/>
            <person name="Lee A."/>
            <person name="Lee J.M."/>
            <person name="Lenz C.A."/>
            <person name="Li J.H."/>
            <person name="Li Y.-P."/>
            <person name="Lin X."/>
            <person name="Liu S.X."/>
            <person name="Liu Z.A."/>
            <person name="Luros J.S."/>
            <person name="Maiti R."/>
            <person name="Marziali A."/>
            <person name="Militscher J."/>
            <person name="Miranda M."/>
            <person name="Nguyen M."/>
            <person name="Nierman W.C."/>
            <person name="Osborne B.I."/>
            <person name="Pai G."/>
            <person name="Peterson J."/>
            <person name="Pham P.K."/>
            <person name="Rizzo M."/>
            <person name="Rooney T."/>
            <person name="Rowley D."/>
            <person name="Sakano H."/>
            <person name="Salzberg S.L."/>
            <person name="Schwartz J.R."/>
            <person name="Shinn P."/>
            <person name="Southwick A.M."/>
            <person name="Sun H."/>
            <person name="Tallon L.J."/>
            <person name="Tambunga G."/>
            <person name="Toriumi M.J."/>
            <person name="Town C.D."/>
            <person name="Utterback T."/>
            <person name="Van Aken S."/>
            <person name="Vaysberg M."/>
            <person name="Vysotskaia V.S."/>
            <person name="Walker M."/>
            <person name="Wu D."/>
            <person name="Yu G."/>
            <person name="Fraser C.M."/>
            <person name="Venter J.C."/>
            <person name="Davis R.W."/>
        </authorList>
    </citation>
    <scope>NUCLEOTIDE SEQUENCE [LARGE SCALE GENOMIC DNA]</scope>
    <source>
        <strain>cv. Columbia</strain>
    </source>
</reference>
<reference key="3">
    <citation type="journal article" date="2017" name="Plant J.">
        <title>Araport11: a complete reannotation of the Arabidopsis thaliana reference genome.</title>
        <authorList>
            <person name="Cheng C.Y."/>
            <person name="Krishnakumar V."/>
            <person name="Chan A.P."/>
            <person name="Thibaud-Nissen F."/>
            <person name="Schobel S."/>
            <person name="Town C.D."/>
        </authorList>
    </citation>
    <scope>GENOME REANNOTATION</scope>
    <source>
        <strain>cv. Columbia</strain>
    </source>
</reference>
<reference key="4">
    <citation type="journal article" date="2004" name="J. Biol. Chem.">
        <title>A C-terminal Myb extension domain defines a novel family of double-strand telomeric DNA-binding proteins in Arabidopsis.</title>
        <authorList>
            <person name="Karamysheva Z.N."/>
            <person name="Surovtseva Y.V."/>
            <person name="Vespa L."/>
            <person name="Shakirov E.V."/>
            <person name="Shippen D.E."/>
        </authorList>
    </citation>
    <scope>GENE FAMILY</scope>
    <scope>DNA-BINDING</scope>
    <scope>TISSUE SPECIFICITY</scope>
    <scope>SUBUNIT</scope>
    <scope>DISRUPTION PHENOTYPE</scope>
</reference>
<reference key="5">
    <citation type="journal article" date="2006" name="Plant Mol. Biol.">
        <title>The MYB transcription factor superfamily of Arabidopsis: expression analysis and phylogenetic comparison with the rice MYB family.</title>
        <authorList>
            <person name="Chen Y."/>
            <person name="Yang X."/>
            <person name="He K."/>
            <person name="Liu M."/>
            <person name="Li J."/>
            <person name="Gao Z."/>
            <person name="Lin Z."/>
            <person name="Zhang Y."/>
            <person name="Wang X."/>
            <person name="Qiu X."/>
            <person name="Shen Y."/>
            <person name="Zhang L."/>
            <person name="Deng X."/>
            <person name="Luo J."/>
            <person name="Deng X.-W."/>
            <person name="Chen Z."/>
            <person name="Gu H."/>
            <person name="Qu L.-J."/>
        </authorList>
    </citation>
    <scope>GENE FAMILY</scope>
</reference>
<protein>
    <recommendedName>
        <fullName>Telomere repeat-binding protein 5</fullName>
    </recommendedName>
    <alternativeName>
        <fullName>Protein TRF-LIKE 2</fullName>
    </alternativeName>
</protein>
<feature type="chain" id="PRO_0000394128" description="Telomere repeat-binding protein 5">
    <location>
        <begin position="1"/>
        <end position="630"/>
    </location>
</feature>
<feature type="domain" description="Ubiquitin-like">
    <location>
        <begin position="354"/>
        <end position="433"/>
    </location>
</feature>
<feature type="domain" description="HTH myb-type" evidence="1">
    <location>
        <begin position="523"/>
        <end position="582"/>
    </location>
</feature>
<feature type="DNA-binding region" description="H-T-H motif" evidence="1">
    <location>
        <begin position="551"/>
        <end position="578"/>
    </location>
</feature>
<feature type="region of interest" description="Disordered" evidence="2">
    <location>
        <begin position="1"/>
        <end position="38"/>
    </location>
</feature>
<feature type="region of interest" description="Disordered" evidence="2">
    <location>
        <begin position="56"/>
        <end position="78"/>
    </location>
</feature>
<feature type="region of interest" description="Disordered" evidence="2">
    <location>
        <begin position="308"/>
        <end position="327"/>
    </location>
</feature>
<feature type="region of interest" description="Disordered" evidence="2">
    <location>
        <begin position="463"/>
        <end position="489"/>
    </location>
</feature>
<feature type="compositionally biased region" description="Low complexity" evidence="2">
    <location>
        <begin position="57"/>
        <end position="71"/>
    </location>
</feature>
<feature type="compositionally biased region" description="Polar residues" evidence="2">
    <location>
        <begin position="309"/>
        <end position="325"/>
    </location>
</feature>
<feature type="sequence conflict" description="In Ref. 1; AAS10005." evidence="4" ref="1">
    <original>L</original>
    <variation>Q</variation>
    <location>
        <position position="630"/>
    </location>
</feature>